<protein>
    <recommendedName>
        <fullName evidence="1">NADH-quinone oxidoreductase subunit H 2</fullName>
        <ecNumber evidence="1">7.1.1.-</ecNumber>
    </recommendedName>
    <alternativeName>
        <fullName evidence="1">NADH dehydrogenase I subunit H 2</fullName>
    </alternativeName>
    <alternativeName>
        <fullName evidence="1">NDH-1 subunit H 2</fullName>
    </alternativeName>
</protein>
<comment type="function">
    <text evidence="1">NDH-1 shuttles electrons from NADH, via FMN and iron-sulfur (Fe-S) centers, to quinones in the respiratory chain. The immediate electron acceptor for the enzyme in this species is believed to be ubiquinone. Couples the redox reaction to proton translocation (for every two electrons transferred, four hydrogen ions are translocated across the cytoplasmic membrane), and thus conserves the redox energy in a proton gradient. This subunit may bind ubiquinone.</text>
</comment>
<comment type="catalytic activity">
    <reaction evidence="1">
        <text>a quinone + NADH + 5 H(+)(in) = a quinol + NAD(+) + 4 H(+)(out)</text>
        <dbReference type="Rhea" id="RHEA:57888"/>
        <dbReference type="ChEBI" id="CHEBI:15378"/>
        <dbReference type="ChEBI" id="CHEBI:24646"/>
        <dbReference type="ChEBI" id="CHEBI:57540"/>
        <dbReference type="ChEBI" id="CHEBI:57945"/>
        <dbReference type="ChEBI" id="CHEBI:132124"/>
    </reaction>
</comment>
<comment type="subunit">
    <text evidence="1">NDH-1 is composed of 14 different subunits. Subunits NuoA, H, J, K, L, M, N constitute the membrane sector of the complex.</text>
</comment>
<comment type="subcellular location">
    <subcellularLocation>
        <location evidence="1">Cell inner membrane</location>
        <topology evidence="1">Multi-pass membrane protein</topology>
    </subcellularLocation>
</comment>
<comment type="similarity">
    <text evidence="1">Belongs to the complex I subunit 1 family.</text>
</comment>
<gene>
    <name evidence="1" type="primary">nuoH2</name>
    <name type="ordered locus">RHOS4_17130</name>
    <name type="ORF">RSP_0106</name>
</gene>
<name>NUOH2_CERS4</name>
<dbReference type="EC" id="7.1.1.-" evidence="1"/>
<dbReference type="EMBL" id="CP000143">
    <property type="protein sequence ID" value="ABA79281.1"/>
    <property type="molecule type" value="Genomic_DNA"/>
</dbReference>
<dbReference type="RefSeq" id="WP_011337998.1">
    <property type="nucleotide sequence ID" value="NC_007493.2"/>
</dbReference>
<dbReference type="RefSeq" id="YP_353182.1">
    <property type="nucleotide sequence ID" value="NC_007493.2"/>
</dbReference>
<dbReference type="SMR" id="Q3J1Q3"/>
<dbReference type="STRING" id="272943.RSP_0106"/>
<dbReference type="EnsemblBacteria" id="ABA79281">
    <property type="protein sequence ID" value="ABA79281"/>
    <property type="gene ID" value="RSP_0106"/>
</dbReference>
<dbReference type="GeneID" id="3719708"/>
<dbReference type="KEGG" id="rsp:RSP_0106"/>
<dbReference type="PATRIC" id="fig|272943.9.peg.2047"/>
<dbReference type="eggNOG" id="COG1005">
    <property type="taxonomic scope" value="Bacteria"/>
</dbReference>
<dbReference type="OrthoDB" id="9803734at2"/>
<dbReference type="PhylomeDB" id="Q3J1Q3"/>
<dbReference type="Proteomes" id="UP000002703">
    <property type="component" value="Chromosome 1"/>
</dbReference>
<dbReference type="GO" id="GO:0005886">
    <property type="term" value="C:plasma membrane"/>
    <property type="evidence" value="ECO:0007669"/>
    <property type="project" value="UniProtKB-SubCell"/>
</dbReference>
<dbReference type="GO" id="GO:0003954">
    <property type="term" value="F:NADH dehydrogenase activity"/>
    <property type="evidence" value="ECO:0007669"/>
    <property type="project" value="TreeGrafter"/>
</dbReference>
<dbReference type="GO" id="GO:0016655">
    <property type="term" value="F:oxidoreductase activity, acting on NAD(P)H, quinone or similar compound as acceptor"/>
    <property type="evidence" value="ECO:0007669"/>
    <property type="project" value="UniProtKB-UniRule"/>
</dbReference>
<dbReference type="GO" id="GO:0048038">
    <property type="term" value="F:quinone binding"/>
    <property type="evidence" value="ECO:0007669"/>
    <property type="project" value="UniProtKB-KW"/>
</dbReference>
<dbReference type="GO" id="GO:0009060">
    <property type="term" value="P:aerobic respiration"/>
    <property type="evidence" value="ECO:0007669"/>
    <property type="project" value="TreeGrafter"/>
</dbReference>
<dbReference type="HAMAP" id="MF_01350">
    <property type="entry name" value="NDH1_NuoH"/>
    <property type="match status" value="1"/>
</dbReference>
<dbReference type="InterPro" id="IPR001694">
    <property type="entry name" value="NADH_UbQ_OxRdtase_su1/FPO"/>
</dbReference>
<dbReference type="NCBIfam" id="NF004741">
    <property type="entry name" value="PRK06076.1-2"/>
    <property type="match status" value="1"/>
</dbReference>
<dbReference type="PANTHER" id="PTHR11432">
    <property type="entry name" value="NADH DEHYDROGENASE SUBUNIT 1"/>
    <property type="match status" value="1"/>
</dbReference>
<dbReference type="PANTHER" id="PTHR11432:SF3">
    <property type="entry name" value="NADH-UBIQUINONE OXIDOREDUCTASE CHAIN 1"/>
    <property type="match status" value="1"/>
</dbReference>
<dbReference type="Pfam" id="PF00146">
    <property type="entry name" value="NADHdh"/>
    <property type="match status" value="1"/>
</dbReference>
<reference key="1">
    <citation type="submission" date="2005-09" db="EMBL/GenBank/DDBJ databases">
        <title>Complete sequence of chromosome 1 of Rhodobacter sphaeroides 2.4.1.</title>
        <authorList>
            <person name="Copeland A."/>
            <person name="Lucas S."/>
            <person name="Lapidus A."/>
            <person name="Barry K."/>
            <person name="Detter J.C."/>
            <person name="Glavina T."/>
            <person name="Hammon N."/>
            <person name="Israni S."/>
            <person name="Pitluck S."/>
            <person name="Richardson P."/>
            <person name="Mackenzie C."/>
            <person name="Choudhary M."/>
            <person name="Larimer F."/>
            <person name="Hauser L.J."/>
            <person name="Land M."/>
            <person name="Donohue T.J."/>
            <person name="Kaplan S."/>
        </authorList>
    </citation>
    <scope>NUCLEOTIDE SEQUENCE [LARGE SCALE GENOMIC DNA]</scope>
    <source>
        <strain>ATCC 17023 / DSM 158 / JCM 6121 / CCUG 31486 / LMG 2827 / NBRC 12203 / NCIMB 8253 / ATH 2.4.1.</strain>
    </source>
</reference>
<evidence type="ECO:0000255" key="1">
    <source>
        <dbReference type="HAMAP-Rule" id="MF_01350"/>
    </source>
</evidence>
<keyword id="KW-0997">Cell inner membrane</keyword>
<keyword id="KW-1003">Cell membrane</keyword>
<keyword id="KW-0472">Membrane</keyword>
<keyword id="KW-0520">NAD</keyword>
<keyword id="KW-0874">Quinone</keyword>
<keyword id="KW-1185">Reference proteome</keyword>
<keyword id="KW-1278">Translocase</keyword>
<keyword id="KW-0812">Transmembrane</keyword>
<keyword id="KW-1133">Transmembrane helix</keyword>
<keyword id="KW-0830">Ubiquinone</keyword>
<proteinExistence type="inferred from homology"/>
<sequence>MSVLLIALFSLILLLALLGAAGVFTWGERRLLGFLQERLGPNRVGPFGFLQWVADTLKLLTKEDAPPAGADLAAYRLAPALAAFPMLAGFGVVAFAPRLVISDLDVGVLFVMGMLALTVWALVLGAWGSRNRYAMLGGLRAAAQMLAYESFLGLSLMGCVLLAGSFRMGDIVAAQEGGLWFILLQPLGAALFFLAGLAAAHRLPFDLQESEQDLVAGFMTEYSGMSFALFFLGEYLAILLVAALFTTLFLGGWAGPILPGPIWFGLKVAAISVVFVWLRAALPRPRYDQLISFAWKVALPLALLNLLVTAWIAVGRAA</sequence>
<organism>
    <name type="scientific">Cereibacter sphaeroides (strain ATCC 17023 / DSM 158 / JCM 6121 / CCUG 31486 / LMG 2827 / NBRC 12203 / NCIMB 8253 / ATH 2.4.1.)</name>
    <name type="common">Rhodobacter sphaeroides</name>
    <dbReference type="NCBI Taxonomy" id="272943"/>
    <lineage>
        <taxon>Bacteria</taxon>
        <taxon>Pseudomonadati</taxon>
        <taxon>Pseudomonadota</taxon>
        <taxon>Alphaproteobacteria</taxon>
        <taxon>Rhodobacterales</taxon>
        <taxon>Paracoccaceae</taxon>
        <taxon>Cereibacter</taxon>
    </lineage>
</organism>
<feature type="chain" id="PRO_0000244940" description="NADH-quinone oxidoreductase subunit H 2">
    <location>
        <begin position="1"/>
        <end position="318"/>
    </location>
</feature>
<feature type="transmembrane region" description="Helical" evidence="1">
    <location>
        <begin position="4"/>
        <end position="24"/>
    </location>
</feature>
<feature type="transmembrane region" description="Helical" evidence="1">
    <location>
        <begin position="77"/>
        <end position="97"/>
    </location>
</feature>
<feature type="transmembrane region" description="Helical" evidence="1">
    <location>
        <begin position="106"/>
        <end position="126"/>
    </location>
</feature>
<feature type="transmembrane region" description="Helical" evidence="1">
    <location>
        <begin position="146"/>
        <end position="166"/>
    </location>
</feature>
<feature type="transmembrane region" description="Helical" evidence="1">
    <location>
        <begin position="179"/>
        <end position="199"/>
    </location>
</feature>
<feature type="transmembrane region" description="Helical" evidence="1">
    <location>
        <begin position="214"/>
        <end position="234"/>
    </location>
</feature>
<feature type="transmembrane region" description="Helical" evidence="1">
    <location>
        <begin position="238"/>
        <end position="258"/>
    </location>
</feature>
<feature type="transmembrane region" description="Helical" evidence="1">
    <location>
        <begin position="262"/>
        <end position="282"/>
    </location>
</feature>
<feature type="transmembrane region" description="Helical" evidence="1">
    <location>
        <begin position="293"/>
        <end position="313"/>
    </location>
</feature>
<accession>Q3J1Q3</accession>